<comment type="function">
    <text evidence="4 5">Inhibits the activity of the calcium ATPases ATP2A2/SERCA2 and ATP2A3/SERCA3 by decreasing their apparent affinity for Ca(2+).</text>
</comment>
<comment type="subunit">
    <text evidence="1 4 5">Homooligomer (PubMed:31449798). Can also form heterooligomers with other sarcoplasmic/endoplasmic reticulum calcium ATPase (SERCA) regulators ERLN, PLN, SLN and STRIT1/DWORF (By similarity). Monomer (PubMed:31449798). Interacts as a monomer with ATP2A2/SERCA2; the interaction results in inhibition of ATP2A2 Ca(2+) affinity (PubMed:27923914, PubMed:31449798).</text>
</comment>
<comment type="subcellular location">
    <subcellularLocation>
        <location evidence="4">Endoplasmic reticulum membrane</location>
        <topology evidence="2">Single-pass membrane protein</topology>
    </subcellularLocation>
</comment>
<comment type="tissue specificity">
    <text evidence="4">In the embryo, expressed in heart, epidermal epithelium, salivary gland, brown fat, intestinal epithelium and bladder urothelium.</text>
</comment>
<accession>Q99M08</accession>
<accession>Q8CEY1</accession>
<dbReference type="EMBL" id="AK007721">
    <property type="protein sequence ID" value="BAC25185.1"/>
    <property type="molecule type" value="mRNA"/>
</dbReference>
<dbReference type="EMBL" id="AK009748">
    <property type="protein sequence ID" value="BAC25270.1"/>
    <property type="molecule type" value="mRNA"/>
</dbReference>
<dbReference type="EMBL" id="AK170776">
    <property type="protein sequence ID" value="BAE42021.1"/>
    <property type="molecule type" value="mRNA"/>
</dbReference>
<dbReference type="EMBL" id="BC002135">
    <property type="protein sequence ID" value="AAH02135.1"/>
    <property type="molecule type" value="mRNA"/>
</dbReference>
<dbReference type="EMBL" id="BC086913">
    <property type="protein sequence ID" value="AAH86913.1"/>
    <property type="molecule type" value="mRNA"/>
</dbReference>
<dbReference type="CCDS" id="CCDS38619.1"/>
<dbReference type="RefSeq" id="NP_077781.1">
    <property type="nucleotide sequence ID" value="NM_024461.2"/>
</dbReference>
<dbReference type="SMR" id="Q99M08"/>
<dbReference type="BioGRID" id="212379">
    <property type="interactions" value="1"/>
</dbReference>
<dbReference type="FunCoup" id="Q99M08">
    <property type="interactions" value="351"/>
</dbReference>
<dbReference type="IntAct" id="Q99M08">
    <property type="interactions" value="1"/>
</dbReference>
<dbReference type="STRING" id="10090.ENSMUSP00000102037"/>
<dbReference type="iPTMnet" id="Q99M08"/>
<dbReference type="PhosphoSitePlus" id="Q99M08"/>
<dbReference type="PaxDb" id="10090-ENSMUSP00000102037"/>
<dbReference type="PeptideAtlas" id="Q99M08"/>
<dbReference type="Pumba" id="Q99M08"/>
<dbReference type="TopDownProteomics" id="Q99M08"/>
<dbReference type="Antibodypedia" id="26668">
    <property type="antibodies" value="85 antibodies from 14 providers"/>
</dbReference>
<dbReference type="Ensembl" id="ENSMUST00000106429.6">
    <property type="protein sequence ID" value="ENSMUSP00000102037.4"/>
    <property type="gene ID" value="ENSMUSG00000054091.10"/>
</dbReference>
<dbReference type="GeneID" id="67704"/>
<dbReference type="KEGG" id="mmu:67704"/>
<dbReference type="UCSC" id="uc008rey.1">
    <property type="organism name" value="mouse"/>
</dbReference>
<dbReference type="AGR" id="MGI:1914954"/>
<dbReference type="CTD" id="401152"/>
<dbReference type="MGI" id="MGI:1914954">
    <property type="gene designation" value="1810037I17Rik"/>
</dbReference>
<dbReference type="VEuPathDB" id="HostDB:ENSMUSG00000054091"/>
<dbReference type="eggNOG" id="ENOG502T0GP">
    <property type="taxonomic scope" value="Eukaryota"/>
</dbReference>
<dbReference type="GeneTree" id="ENSGT00530000064570"/>
<dbReference type="HOGENOM" id="CLU_189559_0_0_1"/>
<dbReference type="InParanoid" id="Q99M08"/>
<dbReference type="OMA" id="DRFPKHS"/>
<dbReference type="OrthoDB" id="9633459at2759"/>
<dbReference type="PhylomeDB" id="Q99M08"/>
<dbReference type="TreeFam" id="TF343305"/>
<dbReference type="BioGRID-ORCS" id="67704">
    <property type="hits" value="3 hits in 74 CRISPR screens"/>
</dbReference>
<dbReference type="PRO" id="PR:Q99M08"/>
<dbReference type="Proteomes" id="UP000000589">
    <property type="component" value="Chromosome 3"/>
</dbReference>
<dbReference type="RNAct" id="Q99M08">
    <property type="molecule type" value="protein"/>
</dbReference>
<dbReference type="Bgee" id="ENSMUSG00000054091">
    <property type="expression patterns" value="Expressed in esophagus and 69 other cell types or tissues"/>
</dbReference>
<dbReference type="GO" id="GO:0005789">
    <property type="term" value="C:endoplasmic reticulum membrane"/>
    <property type="evidence" value="ECO:0000314"/>
    <property type="project" value="MGI"/>
</dbReference>
<dbReference type="InterPro" id="IPR038780">
    <property type="entry name" value="ALN"/>
</dbReference>
<dbReference type="PANTHER" id="PTHR37367">
    <property type="entry name" value="CHROMOSOME 4 OPEN READING FRAME 3"/>
    <property type="match status" value="1"/>
</dbReference>
<dbReference type="PANTHER" id="PTHR37367:SF1">
    <property type="entry name" value="CHROMOSOME 4 OPEN READING FRAME 3"/>
    <property type="match status" value="1"/>
</dbReference>
<dbReference type="Pfam" id="PF17696">
    <property type="entry name" value="ALN"/>
    <property type="match status" value="1"/>
</dbReference>
<sequence>MEVSQAASGTDGVRERRGSFEAGRRNQDEAPQSGMNGLPKHSYWLDLWLFILFDLALFVFVYLLP</sequence>
<evidence type="ECO:0000250" key="1">
    <source>
        <dbReference type="UniProtKB" id="Q8WVX3"/>
    </source>
</evidence>
<evidence type="ECO:0000255" key="2"/>
<evidence type="ECO:0000256" key="3">
    <source>
        <dbReference type="SAM" id="MobiDB-lite"/>
    </source>
</evidence>
<evidence type="ECO:0000269" key="4">
    <source>
    </source>
</evidence>
<evidence type="ECO:0000269" key="5">
    <source>
    </source>
</evidence>
<evidence type="ECO:0000303" key="6">
    <source>
    </source>
</evidence>
<evidence type="ECO:0000305" key="7"/>
<evidence type="ECO:0000312" key="8">
    <source>
        <dbReference type="MGI" id="MGI:1914954"/>
    </source>
</evidence>
<evidence type="ECO:0007744" key="9">
    <source>
    </source>
</evidence>
<evidence type="ECO:0007744" key="10">
    <source>
    </source>
</evidence>
<organism>
    <name type="scientific">Mus musculus</name>
    <name type="common">Mouse</name>
    <dbReference type="NCBI Taxonomy" id="10090"/>
    <lineage>
        <taxon>Eukaryota</taxon>
        <taxon>Metazoa</taxon>
        <taxon>Chordata</taxon>
        <taxon>Craniata</taxon>
        <taxon>Vertebrata</taxon>
        <taxon>Euteleostomi</taxon>
        <taxon>Mammalia</taxon>
        <taxon>Eutheria</taxon>
        <taxon>Euarchontoglires</taxon>
        <taxon>Glires</taxon>
        <taxon>Rodentia</taxon>
        <taxon>Myomorpha</taxon>
        <taxon>Muroidea</taxon>
        <taxon>Muridae</taxon>
        <taxon>Murinae</taxon>
        <taxon>Mus</taxon>
        <taxon>Mus</taxon>
    </lineage>
</organism>
<reference key="1">
    <citation type="journal article" date="2005" name="Science">
        <title>The transcriptional landscape of the mammalian genome.</title>
        <authorList>
            <person name="Carninci P."/>
            <person name="Kasukawa T."/>
            <person name="Katayama S."/>
            <person name="Gough J."/>
            <person name="Frith M.C."/>
            <person name="Maeda N."/>
            <person name="Oyama R."/>
            <person name="Ravasi T."/>
            <person name="Lenhard B."/>
            <person name="Wells C."/>
            <person name="Kodzius R."/>
            <person name="Shimokawa K."/>
            <person name="Bajic V.B."/>
            <person name="Brenner S.E."/>
            <person name="Batalov S."/>
            <person name="Forrest A.R."/>
            <person name="Zavolan M."/>
            <person name="Davis M.J."/>
            <person name="Wilming L.G."/>
            <person name="Aidinis V."/>
            <person name="Allen J.E."/>
            <person name="Ambesi-Impiombato A."/>
            <person name="Apweiler R."/>
            <person name="Aturaliya R.N."/>
            <person name="Bailey T.L."/>
            <person name="Bansal M."/>
            <person name="Baxter L."/>
            <person name="Beisel K.W."/>
            <person name="Bersano T."/>
            <person name="Bono H."/>
            <person name="Chalk A.M."/>
            <person name="Chiu K.P."/>
            <person name="Choudhary V."/>
            <person name="Christoffels A."/>
            <person name="Clutterbuck D.R."/>
            <person name="Crowe M.L."/>
            <person name="Dalla E."/>
            <person name="Dalrymple B.P."/>
            <person name="de Bono B."/>
            <person name="Della Gatta G."/>
            <person name="di Bernardo D."/>
            <person name="Down T."/>
            <person name="Engstrom P."/>
            <person name="Fagiolini M."/>
            <person name="Faulkner G."/>
            <person name="Fletcher C.F."/>
            <person name="Fukushima T."/>
            <person name="Furuno M."/>
            <person name="Futaki S."/>
            <person name="Gariboldi M."/>
            <person name="Georgii-Hemming P."/>
            <person name="Gingeras T.R."/>
            <person name="Gojobori T."/>
            <person name="Green R.E."/>
            <person name="Gustincich S."/>
            <person name="Harbers M."/>
            <person name="Hayashi Y."/>
            <person name="Hensch T.K."/>
            <person name="Hirokawa N."/>
            <person name="Hill D."/>
            <person name="Huminiecki L."/>
            <person name="Iacono M."/>
            <person name="Ikeo K."/>
            <person name="Iwama A."/>
            <person name="Ishikawa T."/>
            <person name="Jakt M."/>
            <person name="Kanapin A."/>
            <person name="Katoh M."/>
            <person name="Kawasawa Y."/>
            <person name="Kelso J."/>
            <person name="Kitamura H."/>
            <person name="Kitano H."/>
            <person name="Kollias G."/>
            <person name="Krishnan S.P."/>
            <person name="Kruger A."/>
            <person name="Kummerfeld S.K."/>
            <person name="Kurochkin I.V."/>
            <person name="Lareau L.F."/>
            <person name="Lazarevic D."/>
            <person name="Lipovich L."/>
            <person name="Liu J."/>
            <person name="Liuni S."/>
            <person name="McWilliam S."/>
            <person name="Madan Babu M."/>
            <person name="Madera M."/>
            <person name="Marchionni L."/>
            <person name="Matsuda H."/>
            <person name="Matsuzawa S."/>
            <person name="Miki H."/>
            <person name="Mignone F."/>
            <person name="Miyake S."/>
            <person name="Morris K."/>
            <person name="Mottagui-Tabar S."/>
            <person name="Mulder N."/>
            <person name="Nakano N."/>
            <person name="Nakauchi H."/>
            <person name="Ng P."/>
            <person name="Nilsson R."/>
            <person name="Nishiguchi S."/>
            <person name="Nishikawa S."/>
            <person name="Nori F."/>
            <person name="Ohara O."/>
            <person name="Okazaki Y."/>
            <person name="Orlando V."/>
            <person name="Pang K.C."/>
            <person name="Pavan W.J."/>
            <person name="Pavesi G."/>
            <person name="Pesole G."/>
            <person name="Petrovsky N."/>
            <person name="Piazza S."/>
            <person name="Reed J."/>
            <person name="Reid J.F."/>
            <person name="Ring B.Z."/>
            <person name="Ringwald M."/>
            <person name="Rost B."/>
            <person name="Ruan Y."/>
            <person name="Salzberg S.L."/>
            <person name="Sandelin A."/>
            <person name="Schneider C."/>
            <person name="Schoenbach C."/>
            <person name="Sekiguchi K."/>
            <person name="Semple C.A."/>
            <person name="Seno S."/>
            <person name="Sessa L."/>
            <person name="Sheng Y."/>
            <person name="Shibata Y."/>
            <person name="Shimada H."/>
            <person name="Shimada K."/>
            <person name="Silva D."/>
            <person name="Sinclair B."/>
            <person name="Sperling S."/>
            <person name="Stupka E."/>
            <person name="Sugiura K."/>
            <person name="Sultana R."/>
            <person name="Takenaka Y."/>
            <person name="Taki K."/>
            <person name="Tammoja K."/>
            <person name="Tan S.L."/>
            <person name="Tang S."/>
            <person name="Taylor M.S."/>
            <person name="Tegner J."/>
            <person name="Teichmann S.A."/>
            <person name="Ueda H.R."/>
            <person name="van Nimwegen E."/>
            <person name="Verardo R."/>
            <person name="Wei C.L."/>
            <person name="Yagi K."/>
            <person name="Yamanishi H."/>
            <person name="Zabarovsky E."/>
            <person name="Zhu S."/>
            <person name="Zimmer A."/>
            <person name="Hide W."/>
            <person name="Bult C."/>
            <person name="Grimmond S.M."/>
            <person name="Teasdale R.D."/>
            <person name="Liu E.T."/>
            <person name="Brusic V."/>
            <person name="Quackenbush J."/>
            <person name="Wahlestedt C."/>
            <person name="Mattick J.S."/>
            <person name="Hume D.A."/>
            <person name="Kai C."/>
            <person name="Sasaki D."/>
            <person name="Tomaru Y."/>
            <person name="Fukuda S."/>
            <person name="Kanamori-Katayama M."/>
            <person name="Suzuki M."/>
            <person name="Aoki J."/>
            <person name="Arakawa T."/>
            <person name="Iida J."/>
            <person name="Imamura K."/>
            <person name="Itoh M."/>
            <person name="Kato T."/>
            <person name="Kawaji H."/>
            <person name="Kawagashira N."/>
            <person name="Kawashima T."/>
            <person name="Kojima M."/>
            <person name="Kondo S."/>
            <person name="Konno H."/>
            <person name="Nakano K."/>
            <person name="Ninomiya N."/>
            <person name="Nishio T."/>
            <person name="Okada M."/>
            <person name="Plessy C."/>
            <person name="Shibata K."/>
            <person name="Shiraki T."/>
            <person name="Suzuki S."/>
            <person name="Tagami M."/>
            <person name="Waki K."/>
            <person name="Watahiki A."/>
            <person name="Okamura-Oho Y."/>
            <person name="Suzuki H."/>
            <person name="Kawai J."/>
            <person name="Hayashizaki Y."/>
        </authorList>
    </citation>
    <scope>NUCLEOTIDE SEQUENCE [LARGE SCALE MRNA]</scope>
    <source>
        <strain>C57BL/6J</strain>
        <strain>NOD</strain>
        <tissue>Pancreas</tissue>
        <tissue>Tongue</tissue>
    </source>
</reference>
<reference key="2">
    <citation type="journal article" date="2004" name="Genome Res.">
        <title>The status, quality, and expansion of the NIH full-length cDNA project: the Mammalian Gene Collection (MGC).</title>
        <authorList>
            <consortium name="The MGC Project Team"/>
        </authorList>
    </citation>
    <scope>NUCLEOTIDE SEQUENCE [LARGE SCALE MRNA]</scope>
    <source>
        <strain>FVB/N</strain>
        <tissue>Kidney</tissue>
        <tissue>Mammary tumor</tissue>
    </source>
</reference>
<reference key="3">
    <citation type="journal article" date="2007" name="Mol. Cell. Proteomics">
        <title>Mitochondrial phosphoproteome revealed by an improved IMAC method and MS/MS/MS.</title>
        <authorList>
            <person name="Lee J."/>
            <person name="Xu Y."/>
            <person name="Chen Y."/>
            <person name="Sprung R."/>
            <person name="Kim S.C."/>
            <person name="Xie S."/>
            <person name="Zhao Y."/>
        </authorList>
    </citation>
    <scope>PHOSPHORYLATION [LARGE SCALE ANALYSIS] AT SER-19</scope>
    <scope>IDENTIFICATION BY MASS SPECTROMETRY [LARGE SCALE ANALYSIS]</scope>
    <source>
        <tissue>Liver</tissue>
    </source>
</reference>
<reference key="4">
    <citation type="journal article" date="2009" name="Immunity">
        <title>The phagosomal proteome in interferon-gamma-activated macrophages.</title>
        <authorList>
            <person name="Trost M."/>
            <person name="English L."/>
            <person name="Lemieux S."/>
            <person name="Courcelles M."/>
            <person name="Desjardins M."/>
            <person name="Thibault P."/>
        </authorList>
    </citation>
    <scope>PHOSPHORYLATION [LARGE SCALE ANALYSIS] AT SER-19</scope>
    <scope>IDENTIFICATION BY MASS SPECTROMETRY [LARGE SCALE ANALYSIS]</scope>
</reference>
<reference key="5">
    <citation type="journal article" date="2016" name="Sci. Signal.">
        <title>Widespread control of calcium signaling by a family of SERCA-inhibiting micropeptides.</title>
        <authorList>
            <person name="Anderson D.M."/>
            <person name="Makarewich C.A."/>
            <person name="Anderson K.M."/>
            <person name="Shelton J.M."/>
            <person name="Bezprozvannaya S."/>
            <person name="Bassel-Duby R."/>
            <person name="Olson E.N."/>
        </authorList>
    </citation>
    <scope>FUNCTION</scope>
    <scope>INTERACTION WITH ATP2A2</scope>
    <scope>SUBCELLULAR LOCATION</scope>
    <scope>TISSUE SPECIFICITY</scope>
</reference>
<reference key="6">
    <citation type="journal article" date="2019" name="J. Mol. Biol.">
        <title>Newly Discovered Micropeptide Regulators of SERCA Form Oligomers but Bind to the Pump as Monomers.</title>
        <authorList>
            <person name="Singh D.R."/>
            <person name="Dalton M.P."/>
            <person name="Cho E.E."/>
            <person name="Pribadi M.P."/>
            <person name="Zak T.J."/>
            <person name="Seflova J."/>
            <person name="Makarewich C.A."/>
            <person name="Olson E.N."/>
            <person name="Robia S.L."/>
        </authorList>
    </citation>
    <scope>FUNCTION</scope>
    <scope>SUBUNIT</scope>
    <scope>INTERACTION WITH ATP2A2</scope>
</reference>
<keyword id="KW-0007">Acetylation</keyword>
<keyword id="KW-0256">Endoplasmic reticulum</keyword>
<keyword id="KW-0472">Membrane</keyword>
<keyword id="KW-0597">Phosphoprotein</keyword>
<keyword id="KW-1185">Reference proteome</keyword>
<keyword id="KW-0812">Transmembrane</keyword>
<keyword id="KW-1133">Transmembrane helix</keyword>
<gene>
    <name type="primary">Arln</name>
    <name evidence="8" type="synonym">Aln</name>
</gene>
<feature type="chain" id="PRO_0000325785" description="Sarcoplasmic/endoplasmic reticulum calcium ATPase regulator ARLN">
    <location>
        <begin position="1"/>
        <end position="65"/>
    </location>
</feature>
<feature type="transmembrane region" description="Helical" evidence="2">
    <location>
        <begin position="44"/>
        <end position="64"/>
    </location>
</feature>
<feature type="region of interest" description="Disordered" evidence="3">
    <location>
        <begin position="1"/>
        <end position="36"/>
    </location>
</feature>
<feature type="compositionally biased region" description="Basic and acidic residues" evidence="3">
    <location>
        <begin position="12"/>
        <end position="28"/>
    </location>
</feature>
<feature type="modified residue" description="N-acetylmethionine" evidence="1">
    <location>
        <position position="1"/>
    </location>
</feature>
<feature type="modified residue" description="Phosphoserine" evidence="9 10">
    <location>
        <position position="19"/>
    </location>
</feature>
<feature type="sequence conflict" description="In Ref. 1; BAC25270." evidence="7" ref="1">
    <original>S</original>
    <variation>T</variation>
    <location>
        <position position="4"/>
    </location>
</feature>
<feature type="sequence conflict" description="In Ref. 1; BAC25270." evidence="7" ref="1">
    <original>A</original>
    <variation>P</variation>
    <location>
        <position position="22"/>
    </location>
</feature>
<protein>
    <recommendedName>
        <fullName evidence="7">Sarcoplasmic/endoplasmic reticulum calcium ATPase regulator ARLN</fullName>
        <shortName evidence="7">SERCA regulator ARLN</shortName>
    </recommendedName>
    <alternativeName>
        <fullName evidence="1">Allregulin</fullName>
    </alternativeName>
    <alternativeName>
        <fullName evidence="6">Another-regulin</fullName>
        <shortName evidence="6">ALN</shortName>
    </alternativeName>
</protein>
<proteinExistence type="evidence at protein level"/>
<name>SRALN_MOUSE</name>